<comment type="function">
    <text>Initiates blood coagulation by forming a complex with circulating factor VII or VIIa. The [TF:VIIa] complex activates factors IX or X by specific limited proteolysis. TF plays a role in normal hemostasis by initiating the cell-surface assembly and propagation of the coagulation protease cascade.</text>
</comment>
<comment type="subunit">
    <text evidence="1">Interacts with HSPE; the interaction, inhibited by heparin, promotes the generation of activated factor X and activates coagulation in the presence of activated factor VII.</text>
</comment>
<comment type="subcellular location">
    <subcellularLocation>
        <location evidence="2">Membrane</location>
        <topology evidence="2">Single-pass type I membrane protein</topology>
    </subcellularLocation>
</comment>
<comment type="induction">
    <text evidence="5">Expression in the liver oscillates in a circadian manner.</text>
</comment>
<comment type="similarity">
    <text evidence="6">Belongs to the tissue factor family.</text>
</comment>
<accession>P20352</accession>
<evidence type="ECO:0000250" key="1"/>
<evidence type="ECO:0000250" key="2">
    <source>
        <dbReference type="UniProtKB" id="P13726"/>
    </source>
</evidence>
<evidence type="ECO:0000255" key="3"/>
<evidence type="ECO:0000269" key="4">
    <source>
    </source>
</evidence>
<evidence type="ECO:0000269" key="5">
    <source>
    </source>
</evidence>
<evidence type="ECO:0000305" key="6"/>
<proteinExistence type="evidence at protein level"/>
<sequence length="294" mass="32935">MAILVRPRLLAALAPTFLGCLLLQVIAGAGIPEKAFNLTWISTDFKTILEWQPKPTNYTYTVQISDRSRNWKNKCFSTTDTECDLTDEIVKDVTWAYEAKVLSVPRRNSVHGDGDQLVIHGEEPPFTNAPKFLPYRDTNLGQPVIQQFEQDGRKLNVVVKDSLTLVRKNGTFLTLRQVFGKDLGYIITYRKGSSTGKKTNITNTNEFSIDVEEGVSYCFFVQAMIFSRKTNQNSPGSSTVCTEQWKSFLGETLIIVGAVVLLATIFIILLSISLCKRRKNRAGQKGKNTPSRLA</sequence>
<organism>
    <name type="scientific">Mus musculus</name>
    <name type="common">Mouse</name>
    <dbReference type="NCBI Taxonomy" id="10090"/>
    <lineage>
        <taxon>Eukaryota</taxon>
        <taxon>Metazoa</taxon>
        <taxon>Chordata</taxon>
        <taxon>Craniata</taxon>
        <taxon>Vertebrata</taxon>
        <taxon>Euteleostomi</taxon>
        <taxon>Mammalia</taxon>
        <taxon>Eutheria</taxon>
        <taxon>Euarchontoglires</taxon>
        <taxon>Glires</taxon>
        <taxon>Rodentia</taxon>
        <taxon>Myomorpha</taxon>
        <taxon>Muroidea</taxon>
        <taxon>Muridae</taxon>
        <taxon>Murinae</taxon>
        <taxon>Mus</taxon>
        <taxon>Mus</taxon>
    </lineage>
</organism>
<keyword id="KW-0094">Blood coagulation</keyword>
<keyword id="KW-1015">Disulfide bond</keyword>
<keyword id="KW-0325">Glycoprotein</keyword>
<keyword id="KW-0356">Hemostasis</keyword>
<keyword id="KW-0449">Lipoprotein</keyword>
<keyword id="KW-0472">Membrane</keyword>
<keyword id="KW-0564">Palmitate</keyword>
<keyword id="KW-1185">Reference proteome</keyword>
<keyword id="KW-0732">Signal</keyword>
<keyword id="KW-0812">Transmembrane</keyword>
<keyword id="KW-1133">Transmembrane helix</keyword>
<name>TF_MOUSE</name>
<protein>
    <recommendedName>
        <fullName>Tissue factor</fullName>
        <shortName>TF</shortName>
    </recommendedName>
    <alternativeName>
        <fullName>Coagulation factor III</fullName>
    </alternativeName>
    <cdAntigenName>CD142</cdAntigenName>
</protein>
<gene>
    <name type="primary">F3</name>
    <name type="synonym">Cf-3</name>
    <name type="synonym">Cf3</name>
</gene>
<reference key="1">
    <citation type="journal article" date="1991" name="J. Biol. Chem.">
        <title>Cloning of murine tissue factor and regulation of gene expression by transforming growth factor type beta 1.</title>
        <authorList>
            <person name="Ranganathan G."/>
            <person name="Blatti S.P."/>
            <person name="Subramaniam M."/>
            <person name="Fass D.N."/>
            <person name="Maihle N.J."/>
            <person name="Getz M.J."/>
        </authorList>
    </citation>
    <scope>NUCLEOTIDE SEQUENCE [MRNA]</scope>
</reference>
<reference key="2">
    <citation type="journal article" date="1989" name="Mol. Cell. Biol.">
        <title>A growth factor-responsive gene of murine BALB/c 3T3 cells encodes a protein homologous to human tissue factor.</title>
        <authorList>
            <person name="Hartzell S."/>
            <person name="Ryder K."/>
            <person name="Lanahan A."/>
            <person name="Lau L.F."/>
            <person name="Nathans D."/>
        </authorList>
    </citation>
    <scope>NUCLEOTIDE SEQUENCE [MRNA]</scope>
    <source>
        <strain>BALB/cJ</strain>
    </source>
</reference>
<reference key="3">
    <citation type="journal article" date="2004" name="Genome Res.">
        <title>The status, quality, and expansion of the NIH full-length cDNA project: the Mammalian Gene Collection (MGC).</title>
        <authorList>
            <consortium name="The MGC Project Team"/>
        </authorList>
    </citation>
    <scope>NUCLEOTIDE SEQUENCE [LARGE SCALE MRNA]</scope>
    <source>
        <strain>FVB/N</strain>
        <tissue>Mammary gland</tissue>
    </source>
</reference>
<reference key="4">
    <citation type="journal article" date="2009" name="Mol. Cell. Proteomics">
        <title>The mouse C2C12 myoblast cell surface N-linked glycoproteome: identification, glycosite occupancy, and membrane orientation.</title>
        <authorList>
            <person name="Gundry R.L."/>
            <person name="Raginski K."/>
            <person name="Tarasova Y."/>
            <person name="Tchernyshyov I."/>
            <person name="Bausch-Fluck D."/>
            <person name="Elliott S.T."/>
            <person name="Boheler K.R."/>
            <person name="Van Eyk J.E."/>
            <person name="Wollscheid B."/>
        </authorList>
    </citation>
    <scope>GLYCOSYLATION [LARGE SCALE ANALYSIS] AT ASN-37 AND ASN-57</scope>
    <source>
        <tissue>Myoblast</tissue>
    </source>
</reference>
<reference key="5">
    <citation type="journal article" date="2010" name="Cell">
        <title>A tissue-specific atlas of mouse protein phosphorylation and expression.</title>
        <authorList>
            <person name="Huttlin E.L."/>
            <person name="Jedrychowski M.P."/>
            <person name="Elias J.E."/>
            <person name="Goswami T."/>
            <person name="Rad R."/>
            <person name="Beausoleil S.A."/>
            <person name="Villen J."/>
            <person name="Haas W."/>
            <person name="Sowa M.E."/>
            <person name="Gygi S.P."/>
        </authorList>
    </citation>
    <scope>IDENTIFICATION BY MASS SPECTROMETRY [LARGE SCALE ANALYSIS]</scope>
    <source>
        <tissue>Brain</tissue>
    </source>
</reference>
<reference key="6">
    <citation type="journal article" date="2013" name="Biochem. Biophys. Res. Commun.">
        <title>The molecular clock regulates circadian transcription of tissue factor gene.</title>
        <authorList>
            <person name="Oishi K."/>
            <person name="Koyanagi S."/>
            <person name="Ohkura N."/>
        </authorList>
    </citation>
    <scope>INDUCTION</scope>
</reference>
<feature type="signal peptide">
    <location>
        <begin position="1"/>
        <end position="28"/>
    </location>
</feature>
<feature type="chain" id="PRO_0000033639" description="Tissue factor">
    <location>
        <begin position="29"/>
        <end position="294"/>
    </location>
</feature>
<feature type="topological domain" description="Extracellular" evidence="3">
    <location>
        <begin position="29"/>
        <end position="251"/>
    </location>
</feature>
<feature type="transmembrane region" description="Helical" evidence="3">
    <location>
        <begin position="252"/>
        <end position="274"/>
    </location>
</feature>
<feature type="topological domain" description="Cytoplasmic" evidence="3">
    <location>
        <begin position="275"/>
        <end position="294"/>
    </location>
</feature>
<feature type="short sequence motif" description="WKS motif">
    <location>
        <begin position="245"/>
        <end position="247"/>
    </location>
</feature>
<feature type="lipid moiety-binding region" description="S-palmitoyl cysteine" evidence="1">
    <location>
        <position position="275"/>
    </location>
</feature>
<feature type="glycosylation site" description="N-linked (GlcNAc...) asparagine" evidence="4">
    <location>
        <position position="37"/>
    </location>
</feature>
<feature type="glycosylation site" description="N-linked (GlcNAc...) asparagine" evidence="4">
    <location>
        <position position="57"/>
    </location>
</feature>
<feature type="glycosylation site" description="N-linked (GlcNAc...) asparagine" evidence="3">
    <location>
        <position position="169"/>
    </location>
</feature>
<feature type="glycosylation site" description="N-linked (GlcNAc...) asparagine" evidence="3">
    <location>
        <position position="200"/>
    </location>
</feature>
<feature type="disulfide bond" evidence="1">
    <location>
        <begin position="75"/>
        <end position="83"/>
    </location>
</feature>
<feature type="disulfide bond" evidence="1">
    <location>
        <begin position="218"/>
        <end position="241"/>
    </location>
</feature>
<feature type="sequence conflict" description="In Ref. 2; AAA40414." evidence="6" ref="2">
    <original>I</original>
    <variation>T</variation>
    <location>
        <position position="26"/>
    </location>
</feature>
<dbReference type="EMBL" id="M57896">
    <property type="protein sequence ID" value="AAA63400.1"/>
    <property type="molecule type" value="mRNA"/>
</dbReference>
<dbReference type="EMBL" id="M26071">
    <property type="protein sequence ID" value="AAA40414.1"/>
    <property type="molecule type" value="mRNA"/>
</dbReference>
<dbReference type="EMBL" id="BC016397">
    <property type="protein sequence ID" value="AAH16397.1"/>
    <property type="molecule type" value="mRNA"/>
</dbReference>
<dbReference type="CCDS" id="CCDS17805.1"/>
<dbReference type="PIR" id="A32318">
    <property type="entry name" value="KFMS3"/>
</dbReference>
<dbReference type="RefSeq" id="NP_034301.3">
    <property type="nucleotide sequence ID" value="NM_010171.3"/>
</dbReference>
<dbReference type="SMR" id="P20352"/>
<dbReference type="ComplexPortal" id="CPX-279">
    <property type="entry name" value="Coagulation factor VIIa - tissue factor complex"/>
</dbReference>
<dbReference type="FunCoup" id="P20352">
    <property type="interactions" value="33"/>
</dbReference>
<dbReference type="STRING" id="10090.ENSMUSP00000029771"/>
<dbReference type="ChEMBL" id="CHEMBL5787"/>
<dbReference type="GlyCosmos" id="P20352">
    <property type="glycosylation" value="4 sites, No reported glycans"/>
</dbReference>
<dbReference type="GlyGen" id="P20352">
    <property type="glycosylation" value="4 sites, 2 N-linked glycans (2 sites)"/>
</dbReference>
<dbReference type="iPTMnet" id="P20352"/>
<dbReference type="PhosphoSitePlus" id="P20352"/>
<dbReference type="SwissPalm" id="P20352"/>
<dbReference type="jPOST" id="P20352"/>
<dbReference type="PaxDb" id="10090-ENSMUSP00000029771"/>
<dbReference type="PeptideAtlas" id="P20352"/>
<dbReference type="ProteomicsDB" id="262806"/>
<dbReference type="Pumba" id="P20352"/>
<dbReference type="ABCD" id="P20352">
    <property type="antibodies" value="1 sequenced antibody"/>
</dbReference>
<dbReference type="DNASU" id="14066"/>
<dbReference type="GeneID" id="14066"/>
<dbReference type="KEGG" id="mmu:14066"/>
<dbReference type="UCSC" id="uc008ree.2">
    <property type="organism name" value="mouse"/>
</dbReference>
<dbReference type="AGR" id="MGI:88381"/>
<dbReference type="CTD" id="2152"/>
<dbReference type="MGI" id="MGI:88381">
    <property type="gene designation" value="F3"/>
</dbReference>
<dbReference type="eggNOG" id="ENOG502RA1F">
    <property type="taxonomic scope" value="Eukaryota"/>
</dbReference>
<dbReference type="InParanoid" id="P20352"/>
<dbReference type="OrthoDB" id="8942372at2759"/>
<dbReference type="PhylomeDB" id="P20352"/>
<dbReference type="TreeFam" id="TF352627"/>
<dbReference type="Reactome" id="R-MMU-140834">
    <property type="pathway name" value="Extrinsic Pathway of Fibrin Clot Formation"/>
</dbReference>
<dbReference type="BioGRID-ORCS" id="14066">
    <property type="hits" value="3 hits in 79 CRISPR screens"/>
</dbReference>
<dbReference type="ChiTaRS" id="Olfr54">
    <property type="organism name" value="mouse"/>
</dbReference>
<dbReference type="PRO" id="PR:P20352"/>
<dbReference type="Proteomes" id="UP000000589">
    <property type="component" value="Unplaced"/>
</dbReference>
<dbReference type="RNAct" id="P20352">
    <property type="molecule type" value="protein"/>
</dbReference>
<dbReference type="GO" id="GO:0016020">
    <property type="term" value="C:membrane"/>
    <property type="evidence" value="ECO:0007669"/>
    <property type="project" value="UniProtKB-SubCell"/>
</dbReference>
<dbReference type="GO" id="GO:0007596">
    <property type="term" value="P:blood coagulation"/>
    <property type="evidence" value="ECO:0000304"/>
    <property type="project" value="MGI"/>
</dbReference>
<dbReference type="FunFam" id="2.60.40.10:FF:000746">
    <property type="entry name" value="Tissue factor"/>
    <property type="match status" value="1"/>
</dbReference>
<dbReference type="Gene3D" id="2.60.40.10">
    <property type="entry name" value="Immunoglobulins"/>
    <property type="match status" value="2"/>
</dbReference>
<dbReference type="InterPro" id="IPR003961">
    <property type="entry name" value="FN3_dom"/>
</dbReference>
<dbReference type="InterPro" id="IPR036116">
    <property type="entry name" value="FN3_sf"/>
</dbReference>
<dbReference type="InterPro" id="IPR013783">
    <property type="entry name" value="Ig-like_fold"/>
</dbReference>
<dbReference type="InterPro" id="IPR015373">
    <property type="entry name" value="Interferon/interleukin_rcp_dom"/>
</dbReference>
<dbReference type="InterPro" id="IPR001187">
    <property type="entry name" value="Tissue_factor"/>
</dbReference>
<dbReference type="InterPro" id="IPR030472">
    <property type="entry name" value="Tissue_Factor_CS"/>
</dbReference>
<dbReference type="InterPro" id="IPR050650">
    <property type="entry name" value="Type-II_Cytokine-TF_Rcpt"/>
</dbReference>
<dbReference type="PANTHER" id="PTHR20859">
    <property type="entry name" value="INTERFERON/INTERLEUKIN RECEPTOR"/>
    <property type="match status" value="1"/>
</dbReference>
<dbReference type="PANTHER" id="PTHR20859:SF22">
    <property type="entry name" value="TISSUE FACTOR"/>
    <property type="match status" value="1"/>
</dbReference>
<dbReference type="Pfam" id="PF09294">
    <property type="entry name" value="Interfer-bind"/>
    <property type="match status" value="1"/>
</dbReference>
<dbReference type="Pfam" id="PF01108">
    <property type="entry name" value="Tissue_fac"/>
    <property type="match status" value="1"/>
</dbReference>
<dbReference type="PIRSF" id="PIRSF002498">
    <property type="entry name" value="Tissue_factor_3"/>
    <property type="match status" value="1"/>
</dbReference>
<dbReference type="PRINTS" id="PR00346">
    <property type="entry name" value="TISSUEFACTOR"/>
</dbReference>
<dbReference type="SUPFAM" id="SSF49265">
    <property type="entry name" value="Fibronectin type III"/>
    <property type="match status" value="2"/>
</dbReference>
<dbReference type="PROSITE" id="PS00621">
    <property type="entry name" value="TISSUE_FACTOR"/>
    <property type="match status" value="1"/>
</dbReference>